<accession>P31958</accession>
<gene>
    <name type="primary">leuB</name>
</gene>
<keyword id="KW-0028">Amino-acid biosynthesis</keyword>
<keyword id="KW-0100">Branched-chain amino acid biosynthesis</keyword>
<keyword id="KW-0963">Cytoplasm</keyword>
<keyword id="KW-0432">Leucine biosynthesis</keyword>
<keyword id="KW-0460">Magnesium</keyword>
<keyword id="KW-0464">Manganese</keyword>
<keyword id="KW-0479">Metal-binding</keyword>
<keyword id="KW-0520">NAD</keyword>
<keyword id="KW-0560">Oxidoreductase</keyword>
<name>LEU3_CLOPA</name>
<feature type="chain" id="PRO_0000083681" description="3-isopropylmalate dehydrogenase">
    <location>
        <begin position="1"/>
        <end position="357"/>
    </location>
</feature>
<feature type="binding site" evidence="1">
    <location>
        <begin position="77"/>
        <end position="90"/>
    </location>
    <ligand>
        <name>NAD(+)</name>
        <dbReference type="ChEBI" id="CHEBI:57540"/>
    </ligand>
</feature>
<feature type="binding site" evidence="1">
    <location>
        <position position="97"/>
    </location>
    <ligand>
        <name>substrate</name>
    </ligand>
</feature>
<feature type="binding site" evidence="1">
    <location>
        <position position="107"/>
    </location>
    <ligand>
        <name>substrate</name>
    </ligand>
</feature>
<feature type="binding site" evidence="1">
    <location>
        <position position="136"/>
    </location>
    <ligand>
        <name>substrate</name>
    </ligand>
</feature>
<feature type="binding site" evidence="1">
    <location>
        <position position="224"/>
    </location>
    <ligand>
        <name>Mg(2+)</name>
        <dbReference type="ChEBI" id="CHEBI:18420"/>
    </ligand>
</feature>
<feature type="binding site" evidence="1">
    <location>
        <position position="224"/>
    </location>
    <ligand>
        <name>substrate</name>
    </ligand>
</feature>
<feature type="binding site" evidence="1">
    <location>
        <position position="248"/>
    </location>
    <ligand>
        <name>Mg(2+)</name>
        <dbReference type="ChEBI" id="CHEBI:18420"/>
    </ligand>
</feature>
<feature type="binding site" evidence="1">
    <location>
        <position position="252"/>
    </location>
    <ligand>
        <name>Mg(2+)</name>
        <dbReference type="ChEBI" id="CHEBI:18420"/>
    </ligand>
</feature>
<feature type="binding site" evidence="1">
    <location>
        <begin position="282"/>
        <end position="294"/>
    </location>
    <ligand>
        <name>NAD(+)</name>
        <dbReference type="ChEBI" id="CHEBI:57540"/>
    </ligand>
</feature>
<feature type="site" description="Important for catalysis" evidence="1">
    <location>
        <position position="143"/>
    </location>
</feature>
<feature type="site" description="Important for catalysis" evidence="1">
    <location>
        <position position="192"/>
    </location>
</feature>
<dbReference type="EC" id="1.1.1.85"/>
<dbReference type="EMBL" id="L06666">
    <property type="protein sequence ID" value="AAC41394.1"/>
    <property type="molecule type" value="Genomic_DNA"/>
</dbReference>
<dbReference type="RefSeq" id="WP_003441655.1">
    <property type="nucleotide sequence ID" value="NZ_LFYL01000001.1"/>
</dbReference>
<dbReference type="SMR" id="P31958"/>
<dbReference type="GeneID" id="93074411"/>
<dbReference type="OrthoDB" id="9806254at2"/>
<dbReference type="BRENDA" id="1.1.1.85">
    <property type="organism ID" value="1502"/>
</dbReference>
<dbReference type="UniPathway" id="UPA00048">
    <property type="reaction ID" value="UER00072"/>
</dbReference>
<dbReference type="GO" id="GO:0005829">
    <property type="term" value="C:cytosol"/>
    <property type="evidence" value="ECO:0007669"/>
    <property type="project" value="TreeGrafter"/>
</dbReference>
<dbReference type="GO" id="GO:0003862">
    <property type="term" value="F:3-isopropylmalate dehydrogenase activity"/>
    <property type="evidence" value="ECO:0007669"/>
    <property type="project" value="UniProtKB-UniRule"/>
</dbReference>
<dbReference type="GO" id="GO:0000287">
    <property type="term" value="F:magnesium ion binding"/>
    <property type="evidence" value="ECO:0007669"/>
    <property type="project" value="InterPro"/>
</dbReference>
<dbReference type="GO" id="GO:0051287">
    <property type="term" value="F:NAD binding"/>
    <property type="evidence" value="ECO:0007669"/>
    <property type="project" value="InterPro"/>
</dbReference>
<dbReference type="GO" id="GO:0009098">
    <property type="term" value="P:L-leucine biosynthetic process"/>
    <property type="evidence" value="ECO:0007669"/>
    <property type="project" value="UniProtKB-UniRule"/>
</dbReference>
<dbReference type="FunFam" id="3.40.718.10:FF:000028">
    <property type="entry name" value="3-isopropylmalate dehydrogenase"/>
    <property type="match status" value="1"/>
</dbReference>
<dbReference type="Gene3D" id="3.40.718.10">
    <property type="entry name" value="Isopropylmalate Dehydrogenase"/>
    <property type="match status" value="1"/>
</dbReference>
<dbReference type="HAMAP" id="MF_01033">
    <property type="entry name" value="LeuB_type1"/>
    <property type="match status" value="1"/>
</dbReference>
<dbReference type="InterPro" id="IPR019818">
    <property type="entry name" value="IsoCit/isopropylmalate_DH_CS"/>
</dbReference>
<dbReference type="InterPro" id="IPR024084">
    <property type="entry name" value="IsoPropMal-DH-like_dom"/>
</dbReference>
<dbReference type="InterPro" id="IPR004429">
    <property type="entry name" value="Isopropylmalate_DH"/>
</dbReference>
<dbReference type="NCBIfam" id="TIGR00169">
    <property type="entry name" value="leuB"/>
    <property type="match status" value="1"/>
</dbReference>
<dbReference type="PANTHER" id="PTHR42979">
    <property type="entry name" value="3-ISOPROPYLMALATE DEHYDROGENASE"/>
    <property type="match status" value="1"/>
</dbReference>
<dbReference type="PANTHER" id="PTHR42979:SF1">
    <property type="entry name" value="3-ISOPROPYLMALATE DEHYDROGENASE"/>
    <property type="match status" value="1"/>
</dbReference>
<dbReference type="Pfam" id="PF00180">
    <property type="entry name" value="Iso_dh"/>
    <property type="match status" value="1"/>
</dbReference>
<dbReference type="SMART" id="SM01329">
    <property type="entry name" value="Iso_dh"/>
    <property type="match status" value="1"/>
</dbReference>
<dbReference type="SUPFAM" id="SSF53659">
    <property type="entry name" value="Isocitrate/Isopropylmalate dehydrogenase-like"/>
    <property type="match status" value="1"/>
</dbReference>
<dbReference type="PROSITE" id="PS00470">
    <property type="entry name" value="IDH_IMDH"/>
    <property type="match status" value="1"/>
</dbReference>
<proteinExistence type="inferred from homology"/>
<comment type="function">
    <text evidence="1">Catalyzes the oxidation of 3-carboxy-2-hydroxy-4-methylpentanoate (3-isopropylmalate) to 3-carboxy-4-methyl-2-oxopentanoate. The product decarboxylates to 4-methyl-2 oxopentanoate (By similarity).</text>
</comment>
<comment type="catalytic activity">
    <reaction>
        <text>(2R,3S)-3-isopropylmalate + NAD(+) = 4-methyl-2-oxopentanoate + CO2 + NADH</text>
        <dbReference type="Rhea" id="RHEA:32271"/>
        <dbReference type="ChEBI" id="CHEBI:16526"/>
        <dbReference type="ChEBI" id="CHEBI:17865"/>
        <dbReference type="ChEBI" id="CHEBI:35121"/>
        <dbReference type="ChEBI" id="CHEBI:57540"/>
        <dbReference type="ChEBI" id="CHEBI:57945"/>
        <dbReference type="EC" id="1.1.1.85"/>
    </reaction>
</comment>
<comment type="cofactor">
    <cofactor evidence="1">
        <name>Mg(2+)</name>
        <dbReference type="ChEBI" id="CHEBI:18420"/>
    </cofactor>
    <cofactor evidence="1">
        <name>Mn(2+)</name>
        <dbReference type="ChEBI" id="CHEBI:29035"/>
    </cofactor>
    <text evidence="1">Binds 1 Mg(2+) or Mn(2+) ion per subunit.</text>
</comment>
<comment type="pathway">
    <text>Amino-acid biosynthesis; L-leucine biosynthesis; L-leucine from 3-methyl-2-oxobutanoate: step 3/4.</text>
</comment>
<comment type="subunit">
    <text evidence="1">Homodimer.</text>
</comment>
<comment type="subcellular location">
    <subcellularLocation>
        <location evidence="1">Cytoplasm</location>
    </subcellularLocation>
</comment>
<comment type="similarity">
    <text evidence="2">Belongs to the isocitrate and isopropylmalate dehydrogenases family. LeuB type 1 subfamily.</text>
</comment>
<organism>
    <name type="scientific">Clostridium pasteurianum</name>
    <dbReference type="NCBI Taxonomy" id="1501"/>
    <lineage>
        <taxon>Bacteria</taxon>
        <taxon>Bacillati</taxon>
        <taxon>Bacillota</taxon>
        <taxon>Clostridia</taxon>
        <taxon>Eubacteriales</taxon>
        <taxon>Clostridiaceae</taxon>
        <taxon>Clostridium</taxon>
    </lineage>
</organism>
<sequence length="357" mass="38925">MKEFKIAVIPGDGIGPDIVREAVKIMTKVGEKYDTKFNFVEVKAGGDAIDAYGEPLPKETIDVCKSSAAVLLGAVGGPKWDNLEGSKRPERALLGLRGALGLYANLRPAKVYNVLKSASPLKNEIIDEGVDLLVVRELIGGIYFGDRGTKEVNGVETAFDTEKYNVDEVKRIAHSAFKAAMKRRKKVTSVDKANVLDASRLWRKTVNEVSKEYPEVELSHLYVDNTAMQLVRKPSQFDVILTNNIFGDILSDEASMITGSIGMLASSSIREDSFGMYEPIHGSAPDIAGLDIANPLAQILSAAMLMEYSLDMSEAARDVEAAVEKVLNEGYRTADIYIEGTKKVGTSEMGNLVLERL</sequence>
<reference key="1">
    <citation type="journal article" date="1993" name="DNA Seq.">
        <title>The nucleotide sequence of genes involved in the leucine biosynthetic pathway of Clostridium pasteurianum.</title>
        <authorList>
            <person name="Oultram J.D."/>
            <person name="Loughlin M."/>
            <person name="Walmsley R.W."/>
            <person name="Gunnery S.M."/>
            <person name="Minton N.P."/>
        </authorList>
    </citation>
    <scope>NUCLEOTIDE SEQUENCE [GENOMIC DNA]</scope>
</reference>
<protein>
    <recommendedName>
        <fullName>3-isopropylmalate dehydrogenase</fullName>
        <ecNumber>1.1.1.85</ecNumber>
    </recommendedName>
    <alternativeName>
        <fullName>3-IPM-DH</fullName>
    </alternativeName>
    <alternativeName>
        <fullName>Beta-IPM dehydrogenase</fullName>
        <shortName>IMDH</shortName>
    </alternativeName>
</protein>
<evidence type="ECO:0000250" key="1"/>
<evidence type="ECO:0000305" key="2"/>